<name>CYB_CEPCM</name>
<feature type="chain" id="PRO_0000060745" description="Cytochrome b">
    <location>
        <begin position="1"/>
        <end position="379"/>
    </location>
</feature>
<feature type="transmembrane region" description="Helical" evidence="2">
    <location>
        <begin position="33"/>
        <end position="53"/>
    </location>
</feature>
<feature type="transmembrane region" description="Helical" evidence="2">
    <location>
        <begin position="77"/>
        <end position="98"/>
    </location>
</feature>
<feature type="transmembrane region" description="Helical" evidence="2">
    <location>
        <begin position="113"/>
        <end position="133"/>
    </location>
</feature>
<feature type="transmembrane region" description="Helical" evidence="2">
    <location>
        <begin position="178"/>
        <end position="198"/>
    </location>
</feature>
<feature type="transmembrane region" description="Helical" evidence="2">
    <location>
        <begin position="226"/>
        <end position="246"/>
    </location>
</feature>
<feature type="transmembrane region" description="Helical" evidence="2">
    <location>
        <begin position="288"/>
        <end position="308"/>
    </location>
</feature>
<feature type="transmembrane region" description="Helical" evidence="2">
    <location>
        <begin position="320"/>
        <end position="340"/>
    </location>
</feature>
<feature type="transmembrane region" description="Helical" evidence="2">
    <location>
        <begin position="347"/>
        <end position="367"/>
    </location>
</feature>
<feature type="binding site" description="axial binding residue" evidence="2">
    <location>
        <position position="83"/>
    </location>
    <ligand>
        <name>heme b</name>
        <dbReference type="ChEBI" id="CHEBI:60344"/>
        <label>b562</label>
    </ligand>
    <ligandPart>
        <name>Fe</name>
        <dbReference type="ChEBI" id="CHEBI:18248"/>
    </ligandPart>
</feature>
<feature type="binding site" description="axial binding residue" evidence="2">
    <location>
        <position position="97"/>
    </location>
    <ligand>
        <name>heme b</name>
        <dbReference type="ChEBI" id="CHEBI:60344"/>
        <label>b566</label>
    </ligand>
    <ligandPart>
        <name>Fe</name>
        <dbReference type="ChEBI" id="CHEBI:18248"/>
    </ligandPart>
</feature>
<feature type="binding site" description="axial binding residue" evidence="2">
    <location>
        <position position="182"/>
    </location>
    <ligand>
        <name>heme b</name>
        <dbReference type="ChEBI" id="CHEBI:60344"/>
        <label>b562</label>
    </ligand>
    <ligandPart>
        <name>Fe</name>
        <dbReference type="ChEBI" id="CHEBI:18248"/>
    </ligandPart>
</feature>
<feature type="binding site" description="axial binding residue" evidence="2">
    <location>
        <position position="196"/>
    </location>
    <ligand>
        <name>heme b</name>
        <dbReference type="ChEBI" id="CHEBI:60344"/>
        <label>b566</label>
    </ligand>
    <ligandPart>
        <name>Fe</name>
        <dbReference type="ChEBI" id="CHEBI:18248"/>
    </ligandPart>
</feature>
<feature type="binding site" evidence="2">
    <location>
        <position position="201"/>
    </location>
    <ligand>
        <name>a ubiquinone</name>
        <dbReference type="ChEBI" id="CHEBI:16389"/>
    </ligand>
</feature>
<evidence type="ECO:0000250" key="1"/>
<evidence type="ECO:0000250" key="2">
    <source>
        <dbReference type="UniProtKB" id="P00157"/>
    </source>
</evidence>
<evidence type="ECO:0000255" key="3">
    <source>
        <dbReference type="PROSITE-ProRule" id="PRU00967"/>
    </source>
</evidence>
<evidence type="ECO:0000255" key="4">
    <source>
        <dbReference type="PROSITE-ProRule" id="PRU00968"/>
    </source>
</evidence>
<keyword id="KW-0249">Electron transport</keyword>
<keyword id="KW-0349">Heme</keyword>
<keyword id="KW-0408">Iron</keyword>
<keyword id="KW-0472">Membrane</keyword>
<keyword id="KW-0479">Metal-binding</keyword>
<keyword id="KW-0496">Mitochondrion</keyword>
<keyword id="KW-0999">Mitochondrion inner membrane</keyword>
<keyword id="KW-0679">Respiratory chain</keyword>
<keyword id="KW-0812">Transmembrane</keyword>
<keyword id="KW-1133">Transmembrane helix</keyword>
<keyword id="KW-0813">Transport</keyword>
<keyword id="KW-0830">Ubiquinone</keyword>
<dbReference type="EMBL" id="AF084073">
    <property type="protein sequence ID" value="AAD54450.1"/>
    <property type="molecule type" value="Genomic_DNA"/>
</dbReference>
<dbReference type="SMR" id="Q9TDL2"/>
<dbReference type="GO" id="GO:0005743">
    <property type="term" value="C:mitochondrial inner membrane"/>
    <property type="evidence" value="ECO:0007669"/>
    <property type="project" value="UniProtKB-SubCell"/>
</dbReference>
<dbReference type="GO" id="GO:0045275">
    <property type="term" value="C:respiratory chain complex III"/>
    <property type="evidence" value="ECO:0007669"/>
    <property type="project" value="InterPro"/>
</dbReference>
<dbReference type="GO" id="GO:0046872">
    <property type="term" value="F:metal ion binding"/>
    <property type="evidence" value="ECO:0007669"/>
    <property type="project" value="UniProtKB-KW"/>
</dbReference>
<dbReference type="GO" id="GO:0008121">
    <property type="term" value="F:ubiquinol-cytochrome-c reductase activity"/>
    <property type="evidence" value="ECO:0007669"/>
    <property type="project" value="InterPro"/>
</dbReference>
<dbReference type="GO" id="GO:0006122">
    <property type="term" value="P:mitochondrial electron transport, ubiquinol to cytochrome c"/>
    <property type="evidence" value="ECO:0007669"/>
    <property type="project" value="TreeGrafter"/>
</dbReference>
<dbReference type="CDD" id="cd00290">
    <property type="entry name" value="cytochrome_b_C"/>
    <property type="match status" value="1"/>
</dbReference>
<dbReference type="CDD" id="cd00284">
    <property type="entry name" value="Cytochrome_b_N"/>
    <property type="match status" value="1"/>
</dbReference>
<dbReference type="FunFam" id="1.20.810.10:FF:000002">
    <property type="entry name" value="Cytochrome b"/>
    <property type="match status" value="1"/>
</dbReference>
<dbReference type="Gene3D" id="1.20.810.10">
    <property type="entry name" value="Cytochrome Bc1 Complex, Chain C"/>
    <property type="match status" value="1"/>
</dbReference>
<dbReference type="InterPro" id="IPR005798">
    <property type="entry name" value="Cyt_b/b6_C"/>
</dbReference>
<dbReference type="InterPro" id="IPR036150">
    <property type="entry name" value="Cyt_b/b6_C_sf"/>
</dbReference>
<dbReference type="InterPro" id="IPR005797">
    <property type="entry name" value="Cyt_b/b6_N"/>
</dbReference>
<dbReference type="InterPro" id="IPR027387">
    <property type="entry name" value="Cytb/b6-like_sf"/>
</dbReference>
<dbReference type="InterPro" id="IPR030689">
    <property type="entry name" value="Cytochrome_b"/>
</dbReference>
<dbReference type="InterPro" id="IPR048260">
    <property type="entry name" value="Cytochrome_b_C_euk/bac"/>
</dbReference>
<dbReference type="InterPro" id="IPR048259">
    <property type="entry name" value="Cytochrome_b_N_euk/bac"/>
</dbReference>
<dbReference type="InterPro" id="IPR016174">
    <property type="entry name" value="Di-haem_cyt_TM"/>
</dbReference>
<dbReference type="PANTHER" id="PTHR19271">
    <property type="entry name" value="CYTOCHROME B"/>
    <property type="match status" value="1"/>
</dbReference>
<dbReference type="PANTHER" id="PTHR19271:SF16">
    <property type="entry name" value="CYTOCHROME B"/>
    <property type="match status" value="1"/>
</dbReference>
<dbReference type="Pfam" id="PF00032">
    <property type="entry name" value="Cytochrom_B_C"/>
    <property type="match status" value="1"/>
</dbReference>
<dbReference type="Pfam" id="PF00033">
    <property type="entry name" value="Cytochrome_B"/>
    <property type="match status" value="1"/>
</dbReference>
<dbReference type="PIRSF" id="PIRSF038885">
    <property type="entry name" value="COB"/>
    <property type="match status" value="1"/>
</dbReference>
<dbReference type="SUPFAM" id="SSF81648">
    <property type="entry name" value="a domain/subunit of cytochrome bc1 complex (Ubiquinol-cytochrome c reductase)"/>
    <property type="match status" value="1"/>
</dbReference>
<dbReference type="SUPFAM" id="SSF81342">
    <property type="entry name" value="Transmembrane di-heme cytochromes"/>
    <property type="match status" value="1"/>
</dbReference>
<dbReference type="PROSITE" id="PS51003">
    <property type="entry name" value="CYTB_CTER"/>
    <property type="match status" value="1"/>
</dbReference>
<dbReference type="PROSITE" id="PS51002">
    <property type="entry name" value="CYTB_NTER"/>
    <property type="match status" value="1"/>
</dbReference>
<gene>
    <name type="primary">MT-CYB</name>
    <name type="synonym">COB</name>
    <name type="synonym">CYTB</name>
    <name type="synonym">MTCYB</name>
</gene>
<organism>
    <name type="scientific">Cephalorhynchus commersonii</name>
    <name type="common">Commerson's dolphin</name>
    <dbReference type="NCBI Taxonomy" id="103582"/>
    <lineage>
        <taxon>Eukaryota</taxon>
        <taxon>Metazoa</taxon>
        <taxon>Chordata</taxon>
        <taxon>Craniata</taxon>
        <taxon>Vertebrata</taxon>
        <taxon>Euteleostomi</taxon>
        <taxon>Mammalia</taxon>
        <taxon>Eutheria</taxon>
        <taxon>Laurasiatheria</taxon>
        <taxon>Artiodactyla</taxon>
        <taxon>Whippomorpha</taxon>
        <taxon>Cetacea</taxon>
        <taxon>Odontoceti</taxon>
        <taxon>Delphinidae</taxon>
        <taxon>Cephalorhynchus</taxon>
    </lineage>
</organism>
<comment type="function">
    <text evidence="2">Component of the ubiquinol-cytochrome c reductase complex (complex III or cytochrome b-c1 complex) that is part of the mitochondrial respiratory chain. The b-c1 complex mediates electron transfer from ubiquinol to cytochrome c. Contributes to the generation of a proton gradient across the mitochondrial membrane that is then used for ATP synthesis.</text>
</comment>
<comment type="cofactor">
    <cofactor evidence="2">
        <name>heme b</name>
        <dbReference type="ChEBI" id="CHEBI:60344"/>
    </cofactor>
    <text evidence="2">Binds 2 heme b groups non-covalently.</text>
</comment>
<comment type="subunit">
    <text evidence="2">The cytochrome bc1 complex contains 11 subunits: 3 respiratory subunits (MT-CYB, CYC1 and UQCRFS1), 2 core proteins (UQCRC1 and UQCRC2) and 6 low-molecular weight proteins (UQCRH/QCR6, UQCRB/QCR7, UQCRQ/QCR8, UQCR10/QCR9, UQCR11/QCR10 and a cleavage product of UQCRFS1). This cytochrome bc1 complex then forms a dimer.</text>
</comment>
<comment type="subcellular location">
    <subcellularLocation>
        <location evidence="2">Mitochondrion inner membrane</location>
        <topology evidence="2">Multi-pass membrane protein</topology>
    </subcellularLocation>
</comment>
<comment type="miscellaneous">
    <text evidence="1">Heme 1 (or BL or b562) is low-potential and absorbs at about 562 nm, and heme 2 (or BH or b566) is high-potential and absorbs at about 566 nm.</text>
</comment>
<comment type="similarity">
    <text evidence="3 4">Belongs to the cytochrome b family.</text>
</comment>
<comment type="caution">
    <text evidence="2">The full-length protein contains only eight transmembrane helices, not nine as predicted by bioinformatics tools.</text>
</comment>
<proteinExistence type="inferred from homology"/>
<protein>
    <recommendedName>
        <fullName>Cytochrome b</fullName>
    </recommendedName>
    <alternativeName>
        <fullName>Complex III subunit 3</fullName>
    </alternativeName>
    <alternativeName>
        <fullName>Complex III subunit III</fullName>
    </alternativeName>
    <alternativeName>
        <fullName>Cytochrome b-c1 complex subunit 3</fullName>
    </alternativeName>
    <alternativeName>
        <fullName>Ubiquinol-cytochrome-c reductase complex cytochrome b subunit</fullName>
    </alternativeName>
</protein>
<sequence length="379" mass="42777">MTNIRKTHPLTKILNNAFIDLPTPSNISSWWNFGSLLGLCLIMQILTGLFLAMHYTPDTSTAFSSVAHICRDVNYGWFIRYLHANGASMFFICLYAHIGRGLYYGSYMFQETWNIGVLLLLTVMATAFVGYVLPWGQMSFWGATVITNLLSAIPYIGTTLVEWIWGGFSVDKATLTRFFAFHFILPFIITALAAVHLLFLHETGSNNPTGIPSNMDMIPFHPYYTIKDILGALFLILTLLALTLFAPDLLGDPDNYTPANPLSTPAHIKPEWYFLFAYAILRSIPNKLGGVLALLLSILILIFIPMLQTSKQRSMMFRPFSQLLFWTLIADLLTLTWIGGQPVEHPYIIVGQLASILYFFLILVLMPTVSLIENKLLKW</sequence>
<accession>Q9TDL2</accession>
<geneLocation type="mitochondrion"/>
<reference key="1">
    <citation type="journal article" date="1999" name="Mar. Mamm. Sci.">
        <title>Phylogenetic relationships among the delphinid cetaceans based on full cytochrome b sequences.</title>
        <authorList>
            <person name="LeDuc R.G."/>
            <person name="Perrin W.F."/>
            <person name="Dizon A.E."/>
        </authorList>
    </citation>
    <scope>NUCLEOTIDE SEQUENCE [GENOMIC DNA]</scope>
</reference>